<reference key="1">
    <citation type="submission" date="2006-12" db="EMBL/GenBank/DDBJ databases">
        <title>Complete sequence of chromosome of Mycobacterium sp. KMS.</title>
        <authorList>
            <consortium name="US DOE Joint Genome Institute"/>
            <person name="Copeland A."/>
            <person name="Lucas S."/>
            <person name="Lapidus A."/>
            <person name="Barry K."/>
            <person name="Detter J.C."/>
            <person name="Glavina del Rio T."/>
            <person name="Hammon N."/>
            <person name="Israni S."/>
            <person name="Dalin E."/>
            <person name="Tice H."/>
            <person name="Pitluck S."/>
            <person name="Kiss H."/>
            <person name="Brettin T."/>
            <person name="Bruce D."/>
            <person name="Han C."/>
            <person name="Tapia R."/>
            <person name="Gilna P."/>
            <person name="Schmutz J."/>
            <person name="Larimer F."/>
            <person name="Land M."/>
            <person name="Hauser L."/>
            <person name="Kyrpides N."/>
            <person name="Mikhailova N."/>
            <person name="Miller C.D."/>
            <person name="Richardson P."/>
        </authorList>
    </citation>
    <scope>NUCLEOTIDE SEQUENCE [LARGE SCALE GENOMIC DNA]</scope>
    <source>
        <strain>KMS</strain>
    </source>
</reference>
<sequence length="175" mass="18199">MAKADKATAVADIAEQFKEATATVVTEYRGLTVANLAQLRRSLGESATYTVAKNTLVKRAAAEAGIDGLDELFTGPTAIAFVQGEPVDAAKAIKAFAKEHKALVIKGGYMEGRALSIDEVNRIADLESREVLLAKLAGAMKGNLAKAAGLFNAPASQVARLAAALQEKKAGEEAA</sequence>
<dbReference type="EMBL" id="CP000518">
    <property type="protein sequence ID" value="ABL90198.1"/>
    <property type="molecule type" value="Genomic_DNA"/>
</dbReference>
<dbReference type="SMR" id="A1UBJ0"/>
<dbReference type="STRING" id="189918.Mkms_0984"/>
<dbReference type="KEGG" id="mkm:Mkms_0984"/>
<dbReference type="HOGENOM" id="CLU_092227_1_0_11"/>
<dbReference type="OrthoDB" id="3186107at2"/>
<dbReference type="GO" id="GO:0015934">
    <property type="term" value="C:large ribosomal subunit"/>
    <property type="evidence" value="ECO:0007669"/>
    <property type="project" value="InterPro"/>
</dbReference>
<dbReference type="GO" id="GO:0070180">
    <property type="term" value="F:large ribosomal subunit rRNA binding"/>
    <property type="evidence" value="ECO:0007669"/>
    <property type="project" value="UniProtKB-UniRule"/>
</dbReference>
<dbReference type="GO" id="GO:0003735">
    <property type="term" value="F:structural constituent of ribosome"/>
    <property type="evidence" value="ECO:0007669"/>
    <property type="project" value="InterPro"/>
</dbReference>
<dbReference type="GO" id="GO:0006412">
    <property type="term" value="P:translation"/>
    <property type="evidence" value="ECO:0007669"/>
    <property type="project" value="UniProtKB-UniRule"/>
</dbReference>
<dbReference type="CDD" id="cd05797">
    <property type="entry name" value="Ribosomal_L10"/>
    <property type="match status" value="1"/>
</dbReference>
<dbReference type="FunFam" id="3.30.70.1730:FF:000003">
    <property type="entry name" value="50S ribosomal protein L10"/>
    <property type="match status" value="1"/>
</dbReference>
<dbReference type="Gene3D" id="3.30.70.1730">
    <property type="match status" value="1"/>
</dbReference>
<dbReference type="Gene3D" id="6.10.250.290">
    <property type="match status" value="1"/>
</dbReference>
<dbReference type="HAMAP" id="MF_00362">
    <property type="entry name" value="Ribosomal_uL10"/>
    <property type="match status" value="1"/>
</dbReference>
<dbReference type="InterPro" id="IPR001790">
    <property type="entry name" value="Ribosomal_uL10"/>
</dbReference>
<dbReference type="InterPro" id="IPR043141">
    <property type="entry name" value="Ribosomal_uL10-like_sf"/>
</dbReference>
<dbReference type="InterPro" id="IPR022973">
    <property type="entry name" value="Ribosomal_uL10_bac"/>
</dbReference>
<dbReference type="InterPro" id="IPR047865">
    <property type="entry name" value="Ribosomal_uL10_bac_type"/>
</dbReference>
<dbReference type="InterPro" id="IPR002363">
    <property type="entry name" value="Ribosomal_uL10_CS_bac"/>
</dbReference>
<dbReference type="NCBIfam" id="NF000955">
    <property type="entry name" value="PRK00099.1-1"/>
    <property type="match status" value="1"/>
</dbReference>
<dbReference type="PANTHER" id="PTHR11560">
    <property type="entry name" value="39S RIBOSOMAL PROTEIN L10, MITOCHONDRIAL"/>
    <property type="match status" value="1"/>
</dbReference>
<dbReference type="Pfam" id="PF00466">
    <property type="entry name" value="Ribosomal_L10"/>
    <property type="match status" value="1"/>
</dbReference>
<dbReference type="SUPFAM" id="SSF160369">
    <property type="entry name" value="Ribosomal protein L10-like"/>
    <property type="match status" value="1"/>
</dbReference>
<dbReference type="PROSITE" id="PS01109">
    <property type="entry name" value="RIBOSOMAL_L10"/>
    <property type="match status" value="1"/>
</dbReference>
<feature type="chain" id="PRO_1000005538" description="Large ribosomal subunit protein uL10">
    <location>
        <begin position="1"/>
        <end position="175"/>
    </location>
</feature>
<organism>
    <name type="scientific">Mycobacterium sp. (strain KMS)</name>
    <dbReference type="NCBI Taxonomy" id="189918"/>
    <lineage>
        <taxon>Bacteria</taxon>
        <taxon>Bacillati</taxon>
        <taxon>Actinomycetota</taxon>
        <taxon>Actinomycetes</taxon>
        <taxon>Mycobacteriales</taxon>
        <taxon>Mycobacteriaceae</taxon>
        <taxon>Mycobacterium</taxon>
    </lineage>
</organism>
<proteinExistence type="inferred from homology"/>
<gene>
    <name evidence="1" type="primary">rplJ</name>
    <name type="ordered locus">Mkms_0984</name>
</gene>
<protein>
    <recommendedName>
        <fullName evidence="1">Large ribosomal subunit protein uL10</fullName>
    </recommendedName>
    <alternativeName>
        <fullName evidence="2">50S ribosomal protein L10</fullName>
    </alternativeName>
</protein>
<keyword id="KW-0687">Ribonucleoprotein</keyword>
<keyword id="KW-0689">Ribosomal protein</keyword>
<keyword id="KW-0694">RNA-binding</keyword>
<keyword id="KW-0699">rRNA-binding</keyword>
<comment type="function">
    <text evidence="1">Forms part of the ribosomal stalk, playing a central role in the interaction of the ribosome with GTP-bound translation factors.</text>
</comment>
<comment type="subunit">
    <text evidence="1">Part of the ribosomal stalk of the 50S ribosomal subunit. The N-terminus interacts with L11 and the large rRNA to form the base of the stalk. The C-terminus forms an elongated spine to which L12 dimers bind in a sequential fashion forming a multimeric L10(L12)X complex.</text>
</comment>
<comment type="similarity">
    <text evidence="1">Belongs to the universal ribosomal protein uL10 family.</text>
</comment>
<name>RL10_MYCSK</name>
<evidence type="ECO:0000255" key="1">
    <source>
        <dbReference type="HAMAP-Rule" id="MF_00362"/>
    </source>
</evidence>
<evidence type="ECO:0000305" key="2"/>
<accession>A1UBJ0</accession>